<name>CP120_SYNY3</name>
<organism>
    <name type="scientific">Synechocystis sp. (strain ATCC 27184 / PCC 6803 / Kazusa)</name>
    <dbReference type="NCBI Taxonomy" id="1111708"/>
    <lineage>
        <taxon>Bacteria</taxon>
        <taxon>Bacillati</taxon>
        <taxon>Cyanobacteriota</taxon>
        <taxon>Cyanophyceae</taxon>
        <taxon>Synechococcales</taxon>
        <taxon>Merismopediaceae</taxon>
        <taxon>Synechocystis</taxon>
    </lineage>
</organism>
<sequence>MITSPTNLNSLPIPPGDFGLPWLGETLNFLNDGDFGKKRQQQFGPIFKTRLFGKNVIFISGALANRFLFTKEQETFQATWPLSTRILLGPNALATQMGEIHRSRRKILYQAFLPRTLDSYLPKMDGIVQGYLEQWGKANEVIWYPQLRRMTFDVAATLFMGEKVSQNPQLFPWFETYIQGLFSLPIPLPNTLFGKSQRARALLLAELEKIIKARQQQPPSEEDALGILLAARDDNNQPLSLPELKDQILLLLFAGHETLTSALSSFCLLLGQHSDIRERVRQEQNKLQLSQELTAETLKKMPYLDQVLQEVLRLIPPVGGGFRELIQDCQFQGFHFPKGWLVSYQISQTHADPDLYPDPEKFDPERFTPDGSATHNPPFAHVPFGGGLRECLGKEFARLEMKLFATRLIQQFDWTLLPGQNLELVVTPSPRPKDNLRVKLHSLM</sequence>
<comment type="cofactor">
    <cofactor evidence="1">
        <name>heme</name>
        <dbReference type="ChEBI" id="CHEBI:30413"/>
    </cofactor>
</comment>
<comment type="similarity">
    <text evidence="2">Belongs to the cytochrome P450 family.</text>
</comment>
<reference key="1">
    <citation type="journal article" date="1995" name="DNA Res.">
        <title>Sequence analysis of the genome of the unicellular cyanobacterium Synechocystis sp. strain PCC6803. I. Sequence features in the 1 Mb region from map positions 64% to 92% of the genome.</title>
        <authorList>
            <person name="Kaneko T."/>
            <person name="Tanaka A."/>
            <person name="Sato S."/>
            <person name="Kotani H."/>
            <person name="Sazuka T."/>
            <person name="Miyajima N."/>
            <person name="Sugiura M."/>
            <person name="Tabata S."/>
        </authorList>
    </citation>
    <scope>NUCLEOTIDE SEQUENCE [LARGE SCALE GENOMIC DNA]</scope>
    <source>
        <strain>ATCC 27184 / PCC 6803 / N-1</strain>
    </source>
</reference>
<reference key="2">
    <citation type="journal article" date="1996" name="DNA Res.">
        <title>Sequence analysis of the genome of the unicellular cyanobacterium Synechocystis sp. strain PCC6803. II. Sequence determination of the entire genome and assignment of potential protein-coding regions.</title>
        <authorList>
            <person name="Kaneko T."/>
            <person name="Sato S."/>
            <person name="Kotani H."/>
            <person name="Tanaka A."/>
            <person name="Asamizu E."/>
            <person name="Nakamura Y."/>
            <person name="Miyajima N."/>
            <person name="Hirosawa M."/>
            <person name="Sugiura M."/>
            <person name="Sasamoto S."/>
            <person name="Kimura T."/>
            <person name="Hosouchi T."/>
            <person name="Matsuno A."/>
            <person name="Muraki A."/>
            <person name="Nakazaki N."/>
            <person name="Naruo K."/>
            <person name="Okumura S."/>
            <person name="Shimpo S."/>
            <person name="Takeuchi C."/>
            <person name="Wada T."/>
            <person name="Watanabe A."/>
            <person name="Yamada M."/>
            <person name="Yasuda M."/>
            <person name="Tabata S."/>
        </authorList>
    </citation>
    <scope>NUCLEOTIDE SEQUENCE [LARGE SCALE GENOMIC DNA]</scope>
    <source>
        <strain>ATCC 27184 / PCC 6803 / Kazusa</strain>
    </source>
</reference>
<accession>Q59990</accession>
<feature type="chain" id="PRO_0000052272" description="Putative cytochrome P450 120">
    <location>
        <begin position="1"/>
        <end position="444"/>
    </location>
</feature>
<feature type="binding site" description="axial binding residue" evidence="1">
    <location>
        <position position="391"/>
    </location>
    <ligand>
        <name>heme</name>
        <dbReference type="ChEBI" id="CHEBI:30413"/>
    </ligand>
    <ligandPart>
        <name>Fe</name>
        <dbReference type="ChEBI" id="CHEBI:18248"/>
    </ligandPart>
</feature>
<feature type="turn" evidence="3">
    <location>
        <begin position="21"/>
        <end position="23"/>
    </location>
</feature>
<feature type="helix" evidence="3">
    <location>
        <begin position="26"/>
        <end position="31"/>
    </location>
</feature>
<feature type="helix" evidence="3">
    <location>
        <begin position="35"/>
        <end position="43"/>
    </location>
</feature>
<feature type="strand" evidence="3">
    <location>
        <begin position="45"/>
        <end position="51"/>
    </location>
</feature>
<feature type="strand" evidence="3">
    <location>
        <begin position="54"/>
        <end position="59"/>
    </location>
</feature>
<feature type="helix" evidence="3">
    <location>
        <begin position="62"/>
        <end position="68"/>
    </location>
</feature>
<feature type="turn" evidence="3">
    <location>
        <begin position="73"/>
        <end position="75"/>
    </location>
</feature>
<feature type="strand" evidence="3">
    <location>
        <begin position="76"/>
        <end position="79"/>
    </location>
</feature>
<feature type="helix" evidence="3">
    <location>
        <begin position="82"/>
        <end position="88"/>
    </location>
</feature>
<feature type="helix" evidence="3">
    <location>
        <begin position="93"/>
        <end position="95"/>
    </location>
</feature>
<feature type="helix" evidence="3">
    <location>
        <begin position="98"/>
        <end position="109"/>
    </location>
</feature>
<feature type="helix" evidence="3">
    <location>
        <begin position="110"/>
        <end position="112"/>
    </location>
</feature>
<feature type="helix" evidence="3">
    <location>
        <begin position="114"/>
        <end position="118"/>
    </location>
</feature>
<feature type="helix" evidence="3">
    <location>
        <begin position="121"/>
        <end position="137"/>
    </location>
</feature>
<feature type="strand" evidence="3">
    <location>
        <begin position="138"/>
        <end position="142"/>
    </location>
</feature>
<feature type="helix" evidence="3">
    <location>
        <begin position="143"/>
        <end position="159"/>
    </location>
</feature>
<feature type="helix" evidence="3">
    <location>
        <begin position="162"/>
        <end position="165"/>
    </location>
</feature>
<feature type="helix" evidence="3">
    <location>
        <begin position="170"/>
        <end position="180"/>
    </location>
</feature>
<feature type="strand" evidence="3">
    <location>
        <begin position="181"/>
        <end position="183"/>
    </location>
</feature>
<feature type="helix" evidence="3">
    <location>
        <begin position="192"/>
        <end position="215"/>
    </location>
</feature>
<feature type="helix" evidence="3">
    <location>
        <begin position="224"/>
        <end position="230"/>
    </location>
</feature>
<feature type="helix" evidence="3">
    <location>
        <begin position="241"/>
        <end position="272"/>
    </location>
</feature>
<feature type="helix" evidence="3">
    <location>
        <begin position="274"/>
        <end position="285"/>
    </location>
</feature>
<feature type="helix" evidence="3">
    <location>
        <begin position="295"/>
        <end position="298"/>
    </location>
</feature>
<feature type="helix" evidence="3">
    <location>
        <begin position="302"/>
        <end position="314"/>
    </location>
</feature>
<feature type="strand" evidence="3">
    <location>
        <begin position="320"/>
        <end position="327"/>
    </location>
</feature>
<feature type="strand" evidence="3">
    <location>
        <begin position="329"/>
        <end position="331"/>
    </location>
</feature>
<feature type="strand" evidence="3">
    <location>
        <begin position="334"/>
        <end position="336"/>
    </location>
</feature>
<feature type="strand" evidence="3">
    <location>
        <begin position="341"/>
        <end position="345"/>
    </location>
</feature>
<feature type="helix" evidence="3">
    <location>
        <begin position="346"/>
        <end position="349"/>
    </location>
</feature>
<feature type="turn" evidence="3">
    <location>
        <begin position="353"/>
        <end position="355"/>
    </location>
</feature>
<feature type="strand" evidence="3">
    <location>
        <begin position="356"/>
        <end position="358"/>
    </location>
</feature>
<feature type="helix" evidence="3">
    <location>
        <begin position="364"/>
        <end position="366"/>
    </location>
</feature>
<feature type="turn" evidence="3">
    <location>
        <begin position="372"/>
        <end position="375"/>
    </location>
</feature>
<feature type="helix" evidence="3">
    <location>
        <begin position="387"/>
        <end position="389"/>
    </location>
</feature>
<feature type="helix" evidence="3">
    <location>
        <begin position="394"/>
        <end position="411"/>
    </location>
</feature>
<feature type="strand" evidence="3">
    <location>
        <begin position="412"/>
        <end position="416"/>
    </location>
</feature>
<feature type="strand" evidence="3">
    <location>
        <begin position="424"/>
        <end position="432"/>
    </location>
</feature>
<feature type="strand" evidence="3">
    <location>
        <begin position="437"/>
        <end position="442"/>
    </location>
</feature>
<protein>
    <recommendedName>
        <fullName>Putative cytochrome P450 120</fullName>
        <ecNumber>1.14.-.-</ecNumber>
    </recommendedName>
</protein>
<gene>
    <name type="primary">cyp120</name>
    <name type="synonym">cyp</name>
    <name type="ordered locus">slr0574</name>
</gene>
<evidence type="ECO:0000250" key="1"/>
<evidence type="ECO:0000305" key="2"/>
<evidence type="ECO:0007829" key="3">
    <source>
        <dbReference type="PDB" id="2VE3"/>
    </source>
</evidence>
<keyword id="KW-0002">3D-structure</keyword>
<keyword id="KW-0349">Heme</keyword>
<keyword id="KW-0408">Iron</keyword>
<keyword id="KW-0479">Metal-binding</keyword>
<keyword id="KW-0503">Monooxygenase</keyword>
<keyword id="KW-0560">Oxidoreductase</keyword>
<keyword id="KW-1185">Reference proteome</keyword>
<proteinExistence type="evidence at protein level"/>
<dbReference type="EC" id="1.14.-.-"/>
<dbReference type="EMBL" id="BA000022">
    <property type="protein sequence ID" value="BAA10496.1"/>
    <property type="molecule type" value="Genomic_DNA"/>
</dbReference>
<dbReference type="PIR" id="S75761">
    <property type="entry name" value="S75761"/>
</dbReference>
<dbReference type="PDB" id="2VE3">
    <property type="method" value="X-ray"/>
    <property type="resolution" value="2.10 A"/>
    <property type="chains" value="A/B=1-444"/>
</dbReference>
<dbReference type="PDB" id="2VE4">
    <property type="method" value="X-ray"/>
    <property type="resolution" value="2.40 A"/>
    <property type="chains" value="A/B=1-444"/>
</dbReference>
<dbReference type="PDBsum" id="2VE3"/>
<dbReference type="PDBsum" id="2VE4"/>
<dbReference type="SMR" id="Q59990"/>
<dbReference type="FunCoup" id="Q59990">
    <property type="interactions" value="239"/>
</dbReference>
<dbReference type="STRING" id="1148.gene:10500000"/>
<dbReference type="PaxDb" id="1148-1001252"/>
<dbReference type="EnsemblBacteria" id="BAA10496">
    <property type="protein sequence ID" value="BAA10496"/>
    <property type="gene ID" value="BAA10496"/>
</dbReference>
<dbReference type="KEGG" id="syn:slr0574"/>
<dbReference type="eggNOG" id="COG2124">
    <property type="taxonomic scope" value="Bacteria"/>
</dbReference>
<dbReference type="InParanoid" id="Q59990"/>
<dbReference type="PhylomeDB" id="Q59990"/>
<dbReference type="EvolutionaryTrace" id="Q59990"/>
<dbReference type="Proteomes" id="UP000001425">
    <property type="component" value="Chromosome"/>
</dbReference>
<dbReference type="GO" id="GO:0020037">
    <property type="term" value="F:heme binding"/>
    <property type="evidence" value="ECO:0007669"/>
    <property type="project" value="InterPro"/>
</dbReference>
<dbReference type="GO" id="GO:0005506">
    <property type="term" value="F:iron ion binding"/>
    <property type="evidence" value="ECO:0007669"/>
    <property type="project" value="InterPro"/>
</dbReference>
<dbReference type="GO" id="GO:0004497">
    <property type="term" value="F:monooxygenase activity"/>
    <property type="evidence" value="ECO:0000318"/>
    <property type="project" value="GO_Central"/>
</dbReference>
<dbReference type="GO" id="GO:0016705">
    <property type="term" value="F:oxidoreductase activity, acting on paired donors, with incorporation or reduction of molecular oxygen"/>
    <property type="evidence" value="ECO:0007669"/>
    <property type="project" value="InterPro"/>
</dbReference>
<dbReference type="CDD" id="cd11044">
    <property type="entry name" value="CYP120A1_CYP26-like"/>
    <property type="match status" value="1"/>
</dbReference>
<dbReference type="FunFam" id="1.10.630.10:FF:000371">
    <property type="entry name" value="Putative cytochrome P450 120"/>
    <property type="match status" value="1"/>
</dbReference>
<dbReference type="Gene3D" id="1.10.630.10">
    <property type="entry name" value="Cytochrome P450"/>
    <property type="match status" value="1"/>
</dbReference>
<dbReference type="InterPro" id="IPR001128">
    <property type="entry name" value="Cyt_P450"/>
</dbReference>
<dbReference type="InterPro" id="IPR017972">
    <property type="entry name" value="Cyt_P450_CS"/>
</dbReference>
<dbReference type="InterPro" id="IPR002401">
    <property type="entry name" value="Cyt_P450_E_grp-I"/>
</dbReference>
<dbReference type="InterPro" id="IPR036396">
    <property type="entry name" value="Cyt_P450_sf"/>
</dbReference>
<dbReference type="PANTHER" id="PTHR24286">
    <property type="entry name" value="CYTOCHROME P450 26"/>
    <property type="match status" value="1"/>
</dbReference>
<dbReference type="PANTHER" id="PTHR24286:SF384">
    <property type="entry name" value="P450, PUTATIVE (EUROFUNG)-RELATED"/>
    <property type="match status" value="1"/>
</dbReference>
<dbReference type="Pfam" id="PF00067">
    <property type="entry name" value="p450"/>
    <property type="match status" value="1"/>
</dbReference>
<dbReference type="PRINTS" id="PR00463">
    <property type="entry name" value="EP450I"/>
</dbReference>
<dbReference type="PRINTS" id="PR00385">
    <property type="entry name" value="P450"/>
</dbReference>
<dbReference type="SUPFAM" id="SSF48264">
    <property type="entry name" value="Cytochrome P450"/>
    <property type="match status" value="1"/>
</dbReference>
<dbReference type="PROSITE" id="PS00086">
    <property type="entry name" value="CYTOCHROME_P450"/>
    <property type="match status" value="1"/>
</dbReference>